<sequence>MGNILKCFISCFDGEDEDGGSGHGRFPNSYPPVSSLHYQPLHLDDLQVPLSPPPPSTRQQQPPPRPALSRLHYQPLRLADLQVPLSPPPPSTRQQQLPPRPARPLGYHHGVLWPTIEITPCDDFLNLEFTTKVCEGPQHHSTPSRKTDLNRCIHEKDDGNSKPSYYWLTKNKDNHVVTPQTKRSPRPPSGVAALERDLVDFTRTFEVPEGLAQHVTSPMQAQVTWYRKLLAAYKDIKYPPKESADAAVLVAATLRGIERTNLEGILAFYGFPIPTISKEASENHPSSIPKGVLFVLKTLPVNAKCIVDGDGFTAYVDTLDPIELRQDCNASCQSRNSKKQKLWDKTAADLQISLENTGQKKMFFGGREILARKYEIRLRGIDAPEIGMQYGKESQDALVKLIARKCVTLHVYGQDQFKRFVCDIHCGGVFIQEQMLVNGHAWHFKNYDKRPQFAKWEKMARDARQGLWAYDNLEKPWEWRKNKRKASRHHNSDVR</sequence>
<keyword id="KW-0106">Calcium</keyword>
<keyword id="KW-1003">Cell membrane</keyword>
<keyword id="KW-0255">Endonuclease</keyword>
<keyword id="KW-0378">Hydrolase</keyword>
<keyword id="KW-0449">Lipoprotein</keyword>
<keyword id="KW-0472">Membrane</keyword>
<keyword id="KW-0479">Metal-binding</keyword>
<keyword id="KW-0519">Myristate</keyword>
<keyword id="KW-0540">Nuclease</keyword>
<keyword id="KW-0564">Palmitate</keyword>
<keyword id="KW-1185">Reference proteome</keyword>
<accession>Q2QUS0</accession>
<accession>A0A0P0Y8P5</accession>
<proteinExistence type="evidence at transcript level"/>
<comment type="function">
    <text evidence="1">Enzyme that catalyzes the hydrolysis of both DNA and RNA at the 5' position of the phosphodiester bond.</text>
</comment>
<comment type="cofactor">
    <cofactor evidence="1">
        <name>Ca(2+)</name>
        <dbReference type="ChEBI" id="CHEBI:29108"/>
    </cofactor>
    <text evidence="1">Binds 1 Ca(2+) ion per subunit.</text>
</comment>
<comment type="subcellular location">
    <subcellularLocation>
        <location evidence="5">Cell membrane</location>
        <topology evidence="5">Lipid-anchor</topology>
    </subcellularLocation>
</comment>
<comment type="similarity">
    <text evidence="3">Belongs to the thermonuclease family.</text>
</comment>
<protein>
    <recommendedName>
        <fullName>Probable staphylococcal-like nuclease CAN4</fullName>
        <ecNumber>3.1.31.-</ecNumber>
    </recommendedName>
    <alternativeName>
        <fullName>Calcium-dependent nuclease 4</fullName>
        <shortName>Ca(2+)-dependent nuclease 4</shortName>
    </alternativeName>
</protein>
<dbReference type="EC" id="3.1.31.-"/>
<dbReference type="EMBL" id="AL928776">
    <property type="status" value="NOT_ANNOTATED_CDS"/>
    <property type="molecule type" value="Genomic_DNA"/>
</dbReference>
<dbReference type="EMBL" id="DP000011">
    <property type="protein sequence ID" value="ABA96961.2"/>
    <property type="molecule type" value="Genomic_DNA"/>
</dbReference>
<dbReference type="EMBL" id="AP008218">
    <property type="protein sequence ID" value="BAH95603.1"/>
    <property type="molecule type" value="Genomic_DNA"/>
</dbReference>
<dbReference type="EMBL" id="AP014968">
    <property type="protein sequence ID" value="BAT16555.1"/>
    <property type="molecule type" value="Genomic_DNA"/>
</dbReference>
<dbReference type="EMBL" id="AK068445">
    <property type="protein sequence ID" value="BAG90912.1"/>
    <property type="molecule type" value="mRNA"/>
</dbReference>
<dbReference type="RefSeq" id="XP_015620732.1">
    <property type="nucleotide sequence ID" value="XM_015765246.1"/>
</dbReference>
<dbReference type="SMR" id="Q2QUS0"/>
<dbReference type="STRING" id="39947.Q2QUS0"/>
<dbReference type="PaxDb" id="39947-Q2QUS0"/>
<dbReference type="EnsemblPlants" id="Os12t0255200-01">
    <property type="protein sequence ID" value="Os12t0255200-01"/>
    <property type="gene ID" value="Os12g0255200"/>
</dbReference>
<dbReference type="Gramene" id="Os12t0255200-01">
    <property type="protein sequence ID" value="Os12t0255200-01"/>
    <property type="gene ID" value="Os12g0255200"/>
</dbReference>
<dbReference type="KEGG" id="dosa:Os12g0255200"/>
<dbReference type="eggNOG" id="ENOG502QT2R">
    <property type="taxonomic scope" value="Eukaryota"/>
</dbReference>
<dbReference type="HOGENOM" id="CLU_046484_1_0_1"/>
<dbReference type="InParanoid" id="Q2QUS0"/>
<dbReference type="OMA" id="CIHEKDD"/>
<dbReference type="OrthoDB" id="430293at2759"/>
<dbReference type="Proteomes" id="UP000000763">
    <property type="component" value="Chromosome 12"/>
</dbReference>
<dbReference type="Proteomes" id="UP000059680">
    <property type="component" value="Chromosome 12"/>
</dbReference>
<dbReference type="ExpressionAtlas" id="Q2QUS0">
    <property type="expression patterns" value="baseline and differential"/>
</dbReference>
<dbReference type="GO" id="GO:0005886">
    <property type="term" value="C:plasma membrane"/>
    <property type="evidence" value="ECO:0007669"/>
    <property type="project" value="UniProtKB-SubCell"/>
</dbReference>
<dbReference type="GO" id="GO:0004519">
    <property type="term" value="F:endonuclease activity"/>
    <property type="evidence" value="ECO:0007669"/>
    <property type="project" value="UniProtKB-KW"/>
</dbReference>
<dbReference type="GO" id="GO:0046872">
    <property type="term" value="F:metal ion binding"/>
    <property type="evidence" value="ECO:0007669"/>
    <property type="project" value="UniProtKB-KW"/>
</dbReference>
<dbReference type="Gene3D" id="2.40.50.90">
    <property type="match status" value="1"/>
</dbReference>
<dbReference type="InterPro" id="IPR035437">
    <property type="entry name" value="SNase_OB-fold_sf"/>
</dbReference>
<dbReference type="InterPro" id="IPR016071">
    <property type="entry name" value="Staphylococal_nuclease_OB-fold"/>
</dbReference>
<dbReference type="PANTHER" id="PTHR12302">
    <property type="entry name" value="EBNA2 BINDING PROTEIN P100"/>
    <property type="match status" value="1"/>
</dbReference>
<dbReference type="PANTHER" id="PTHR12302:SF17">
    <property type="entry name" value="STAPHYLOCOCCAL-LIKE NUCLEASE CAN3-RELATED"/>
    <property type="match status" value="1"/>
</dbReference>
<dbReference type="Pfam" id="PF00565">
    <property type="entry name" value="SNase"/>
    <property type="match status" value="1"/>
</dbReference>
<dbReference type="SMART" id="SM00318">
    <property type="entry name" value="SNc"/>
    <property type="match status" value="1"/>
</dbReference>
<dbReference type="SUPFAM" id="SSF50199">
    <property type="entry name" value="Staphylococcal nuclease"/>
    <property type="match status" value="1"/>
</dbReference>
<dbReference type="PROSITE" id="PS50830">
    <property type="entry name" value="TNASE_3"/>
    <property type="match status" value="1"/>
</dbReference>
<reference key="1">
    <citation type="journal article" date="2005" name="BMC Biol.">
        <title>The sequence of rice chromosomes 11 and 12, rich in disease resistance genes and recent gene duplications.</title>
        <authorList>
            <consortium name="The rice chromosomes 11 and 12 sequencing consortia"/>
        </authorList>
    </citation>
    <scope>NUCLEOTIDE SEQUENCE [LARGE SCALE GENOMIC DNA]</scope>
    <source>
        <strain>cv. Nipponbare</strain>
    </source>
</reference>
<reference key="2">
    <citation type="journal article" date="2005" name="Nature">
        <title>The map-based sequence of the rice genome.</title>
        <authorList>
            <consortium name="International rice genome sequencing project (IRGSP)"/>
        </authorList>
    </citation>
    <scope>NUCLEOTIDE SEQUENCE [LARGE SCALE GENOMIC DNA]</scope>
    <source>
        <strain>cv. Nipponbare</strain>
    </source>
</reference>
<reference key="3">
    <citation type="journal article" date="2008" name="Nucleic Acids Res.">
        <title>The rice annotation project database (RAP-DB): 2008 update.</title>
        <authorList>
            <consortium name="The rice annotation project (RAP)"/>
        </authorList>
    </citation>
    <scope>GENOME REANNOTATION</scope>
    <source>
        <strain>cv. Nipponbare</strain>
    </source>
</reference>
<reference key="4">
    <citation type="journal article" date="2013" name="Rice">
        <title>Improvement of the Oryza sativa Nipponbare reference genome using next generation sequence and optical map data.</title>
        <authorList>
            <person name="Kawahara Y."/>
            <person name="de la Bastide M."/>
            <person name="Hamilton J.P."/>
            <person name="Kanamori H."/>
            <person name="McCombie W.R."/>
            <person name="Ouyang S."/>
            <person name="Schwartz D.C."/>
            <person name="Tanaka T."/>
            <person name="Wu J."/>
            <person name="Zhou S."/>
            <person name="Childs K.L."/>
            <person name="Davidson R.M."/>
            <person name="Lin H."/>
            <person name="Quesada-Ocampo L."/>
            <person name="Vaillancourt B."/>
            <person name="Sakai H."/>
            <person name="Lee S.S."/>
            <person name="Kim J."/>
            <person name="Numa H."/>
            <person name="Itoh T."/>
            <person name="Buell C.R."/>
            <person name="Matsumoto T."/>
        </authorList>
    </citation>
    <scope>GENOME REANNOTATION</scope>
    <source>
        <strain>cv. Nipponbare</strain>
    </source>
</reference>
<reference key="5">
    <citation type="journal article" date="2003" name="Science">
        <title>Collection, mapping, and annotation of over 28,000 cDNA clones from japonica rice.</title>
        <authorList>
            <consortium name="The rice full-length cDNA consortium"/>
        </authorList>
    </citation>
    <scope>NUCLEOTIDE SEQUENCE [LARGE SCALE MRNA]</scope>
    <source>
        <strain>cv. Nipponbare</strain>
    </source>
</reference>
<evidence type="ECO:0000250" key="1"/>
<evidence type="ECO:0000255" key="2"/>
<evidence type="ECO:0000255" key="3">
    <source>
        <dbReference type="PROSITE-ProRule" id="PRU00272"/>
    </source>
</evidence>
<evidence type="ECO:0000256" key="4">
    <source>
        <dbReference type="SAM" id="MobiDB-lite"/>
    </source>
</evidence>
<evidence type="ECO:0000305" key="5"/>
<gene>
    <name type="ordered locus">Os12g0255200</name>
    <name type="ordered locus">LOC_Os12g15314</name>
    <name type="ORF">OSJNBa0036A15</name>
</gene>
<feature type="initiator methionine" description="Removed" evidence="2">
    <location>
        <position position="1"/>
    </location>
</feature>
<feature type="chain" id="PRO_0000430203" description="Probable staphylococcal-like nuclease CAN4">
    <location>
        <begin position="2"/>
        <end position="495"/>
    </location>
</feature>
<feature type="domain" description="TNase-like" evidence="3">
    <location>
        <begin position="297"/>
        <end position="470"/>
    </location>
</feature>
<feature type="region of interest" description="Disordered" evidence="4">
    <location>
        <begin position="45"/>
        <end position="68"/>
    </location>
</feature>
<feature type="region of interest" description="Disordered" evidence="4">
    <location>
        <begin position="81"/>
        <end position="101"/>
    </location>
</feature>
<feature type="compositionally biased region" description="Pro residues" evidence="4">
    <location>
        <begin position="50"/>
        <end position="66"/>
    </location>
</feature>
<feature type="active site" evidence="3">
    <location>
        <position position="377"/>
    </location>
</feature>
<feature type="active site" evidence="3">
    <location>
        <position position="385"/>
    </location>
</feature>
<feature type="active site" evidence="3">
    <location>
        <position position="419"/>
    </location>
</feature>
<feature type="binding site" evidence="3">
    <location>
        <position position="310"/>
    </location>
    <ligand>
        <name>Ca(2+)</name>
        <dbReference type="ChEBI" id="CHEBI:29108"/>
    </ligand>
</feature>
<feature type="binding site" evidence="3">
    <location>
        <position position="382"/>
    </location>
    <ligand>
        <name>Ca(2+)</name>
        <dbReference type="ChEBI" id="CHEBI:29108"/>
    </ligand>
</feature>
<feature type="lipid moiety-binding region" description="N-myristoyl glycine" evidence="2">
    <location>
        <position position="2"/>
    </location>
</feature>
<feature type="lipid moiety-binding region" description="S-palmitoyl cysteine" evidence="2">
    <location>
        <position position="11"/>
    </location>
</feature>
<organism>
    <name type="scientific">Oryza sativa subsp. japonica</name>
    <name type="common">Rice</name>
    <dbReference type="NCBI Taxonomy" id="39947"/>
    <lineage>
        <taxon>Eukaryota</taxon>
        <taxon>Viridiplantae</taxon>
        <taxon>Streptophyta</taxon>
        <taxon>Embryophyta</taxon>
        <taxon>Tracheophyta</taxon>
        <taxon>Spermatophyta</taxon>
        <taxon>Magnoliopsida</taxon>
        <taxon>Liliopsida</taxon>
        <taxon>Poales</taxon>
        <taxon>Poaceae</taxon>
        <taxon>BOP clade</taxon>
        <taxon>Oryzoideae</taxon>
        <taxon>Oryzeae</taxon>
        <taxon>Oryzinae</taxon>
        <taxon>Oryza</taxon>
        <taxon>Oryza sativa</taxon>
    </lineage>
</organism>
<name>CAN4_ORYSJ</name>